<dbReference type="EC" id="3.5.1.108" evidence="1"/>
<dbReference type="EMBL" id="CP000539">
    <property type="protein sequence ID" value="ABM43774.1"/>
    <property type="molecule type" value="Genomic_DNA"/>
</dbReference>
<dbReference type="SMR" id="A1WBZ9"/>
<dbReference type="STRING" id="232721.Ajs_3663"/>
<dbReference type="KEGG" id="ajs:Ajs_3663"/>
<dbReference type="eggNOG" id="COG0774">
    <property type="taxonomic scope" value="Bacteria"/>
</dbReference>
<dbReference type="HOGENOM" id="CLU_046528_1_0_4"/>
<dbReference type="UniPathway" id="UPA00359">
    <property type="reaction ID" value="UER00478"/>
</dbReference>
<dbReference type="Proteomes" id="UP000000645">
    <property type="component" value="Chromosome"/>
</dbReference>
<dbReference type="GO" id="GO:0016020">
    <property type="term" value="C:membrane"/>
    <property type="evidence" value="ECO:0007669"/>
    <property type="project" value="GOC"/>
</dbReference>
<dbReference type="GO" id="GO:0046872">
    <property type="term" value="F:metal ion binding"/>
    <property type="evidence" value="ECO:0007669"/>
    <property type="project" value="UniProtKB-KW"/>
</dbReference>
<dbReference type="GO" id="GO:0103117">
    <property type="term" value="F:UDP-3-O-acyl-N-acetylglucosamine deacetylase activity"/>
    <property type="evidence" value="ECO:0007669"/>
    <property type="project" value="UniProtKB-UniRule"/>
</dbReference>
<dbReference type="GO" id="GO:0009245">
    <property type="term" value="P:lipid A biosynthetic process"/>
    <property type="evidence" value="ECO:0007669"/>
    <property type="project" value="UniProtKB-UniRule"/>
</dbReference>
<dbReference type="Gene3D" id="3.30.230.20">
    <property type="entry name" value="lpxc deacetylase, domain 1"/>
    <property type="match status" value="1"/>
</dbReference>
<dbReference type="Gene3D" id="3.30.1700.10">
    <property type="entry name" value="lpxc deacetylase, domain 2"/>
    <property type="match status" value="1"/>
</dbReference>
<dbReference type="HAMAP" id="MF_00388">
    <property type="entry name" value="LpxC"/>
    <property type="match status" value="1"/>
</dbReference>
<dbReference type="InterPro" id="IPR020568">
    <property type="entry name" value="Ribosomal_Su5_D2-typ_SF"/>
</dbReference>
<dbReference type="InterPro" id="IPR004463">
    <property type="entry name" value="UDP-acyl_GlcNac_deAcase"/>
</dbReference>
<dbReference type="InterPro" id="IPR011334">
    <property type="entry name" value="UDP-acyl_GlcNac_deAcase_C"/>
</dbReference>
<dbReference type="InterPro" id="IPR015870">
    <property type="entry name" value="UDP-acyl_N-AcGlcN_deAcase_N"/>
</dbReference>
<dbReference type="NCBIfam" id="TIGR00325">
    <property type="entry name" value="lpxC"/>
    <property type="match status" value="1"/>
</dbReference>
<dbReference type="PANTHER" id="PTHR33694">
    <property type="entry name" value="UDP-3-O-ACYL-N-ACETYLGLUCOSAMINE DEACETYLASE 1, MITOCHONDRIAL-RELATED"/>
    <property type="match status" value="1"/>
</dbReference>
<dbReference type="PANTHER" id="PTHR33694:SF1">
    <property type="entry name" value="UDP-3-O-ACYL-N-ACETYLGLUCOSAMINE DEACETYLASE 1, MITOCHONDRIAL-RELATED"/>
    <property type="match status" value="1"/>
</dbReference>
<dbReference type="Pfam" id="PF03331">
    <property type="entry name" value="LpxC"/>
    <property type="match status" value="1"/>
</dbReference>
<dbReference type="SUPFAM" id="SSF54211">
    <property type="entry name" value="Ribosomal protein S5 domain 2-like"/>
    <property type="match status" value="2"/>
</dbReference>
<protein>
    <recommendedName>
        <fullName evidence="1">UDP-3-O-acyl-N-acetylglucosamine deacetylase</fullName>
        <shortName evidence="1">UDP-3-O-acyl-GlcNAc deacetylase</shortName>
        <ecNumber evidence="1">3.5.1.108</ecNumber>
    </recommendedName>
    <alternativeName>
        <fullName evidence="1">UDP-3-O-[R-3-hydroxymyristoyl]-N-acetylglucosamine deacetylase</fullName>
    </alternativeName>
</protein>
<feature type="chain" id="PRO_1000190875" description="UDP-3-O-acyl-N-acetylglucosamine deacetylase">
    <location>
        <begin position="1"/>
        <end position="307"/>
    </location>
</feature>
<feature type="active site" description="Proton donor" evidence="1">
    <location>
        <position position="268"/>
    </location>
</feature>
<feature type="binding site" evidence="1">
    <location>
        <position position="78"/>
    </location>
    <ligand>
        <name>Zn(2+)</name>
        <dbReference type="ChEBI" id="CHEBI:29105"/>
    </ligand>
</feature>
<feature type="binding site" evidence="1">
    <location>
        <position position="241"/>
    </location>
    <ligand>
        <name>Zn(2+)</name>
        <dbReference type="ChEBI" id="CHEBI:29105"/>
    </ligand>
</feature>
<feature type="binding site" evidence="1">
    <location>
        <position position="245"/>
    </location>
    <ligand>
        <name>Zn(2+)</name>
        <dbReference type="ChEBI" id="CHEBI:29105"/>
    </ligand>
</feature>
<reference key="1">
    <citation type="submission" date="2006-12" db="EMBL/GenBank/DDBJ databases">
        <title>Complete sequence of chromosome 1 of Acidovorax sp. JS42.</title>
        <authorList>
            <person name="Copeland A."/>
            <person name="Lucas S."/>
            <person name="Lapidus A."/>
            <person name="Barry K."/>
            <person name="Detter J.C."/>
            <person name="Glavina del Rio T."/>
            <person name="Dalin E."/>
            <person name="Tice H."/>
            <person name="Pitluck S."/>
            <person name="Chertkov O."/>
            <person name="Brettin T."/>
            <person name="Bruce D."/>
            <person name="Han C."/>
            <person name="Tapia R."/>
            <person name="Gilna P."/>
            <person name="Schmutz J."/>
            <person name="Larimer F."/>
            <person name="Land M."/>
            <person name="Hauser L."/>
            <person name="Kyrpides N."/>
            <person name="Kim E."/>
            <person name="Stahl D."/>
            <person name="Richardson P."/>
        </authorList>
    </citation>
    <scope>NUCLEOTIDE SEQUENCE [LARGE SCALE GENOMIC DNA]</scope>
    <source>
        <strain>JS42</strain>
    </source>
</reference>
<comment type="function">
    <text evidence="1">Catalyzes the hydrolysis of UDP-3-O-myristoyl-N-acetylglucosamine to form UDP-3-O-myristoylglucosamine and acetate, the committed step in lipid A biosynthesis.</text>
</comment>
<comment type="catalytic activity">
    <reaction evidence="1">
        <text>a UDP-3-O-[(3R)-3-hydroxyacyl]-N-acetyl-alpha-D-glucosamine + H2O = a UDP-3-O-[(3R)-3-hydroxyacyl]-alpha-D-glucosamine + acetate</text>
        <dbReference type="Rhea" id="RHEA:67816"/>
        <dbReference type="ChEBI" id="CHEBI:15377"/>
        <dbReference type="ChEBI" id="CHEBI:30089"/>
        <dbReference type="ChEBI" id="CHEBI:137740"/>
        <dbReference type="ChEBI" id="CHEBI:173225"/>
        <dbReference type="EC" id="3.5.1.108"/>
    </reaction>
</comment>
<comment type="cofactor">
    <cofactor evidence="1">
        <name>Zn(2+)</name>
        <dbReference type="ChEBI" id="CHEBI:29105"/>
    </cofactor>
</comment>
<comment type="pathway">
    <text evidence="1">Glycolipid biosynthesis; lipid IV(A) biosynthesis; lipid IV(A) from (3R)-3-hydroxytetradecanoyl-[acyl-carrier-protein] and UDP-N-acetyl-alpha-D-glucosamine: step 2/6.</text>
</comment>
<comment type="similarity">
    <text evidence="1">Belongs to the LpxC family.</text>
</comment>
<gene>
    <name evidence="1" type="primary">lpxC</name>
    <name type="ordered locus">Ajs_3663</name>
</gene>
<proteinExistence type="inferred from homology"/>
<accession>A1WBZ9</accession>
<keyword id="KW-0378">Hydrolase</keyword>
<keyword id="KW-0441">Lipid A biosynthesis</keyword>
<keyword id="KW-0444">Lipid biosynthesis</keyword>
<keyword id="KW-0443">Lipid metabolism</keyword>
<keyword id="KW-0479">Metal-binding</keyword>
<keyword id="KW-0862">Zinc</keyword>
<sequence>MLQQRTIKTLTRAVGVGLHSGQRVELTLRPAQPDTGIVFRRVDLPEPVDIPITATAVVDTRMASTIGAGGAKVHTVEHLMSACAGLGLDNLYIDITAEEVPILDGSSASFVFLLQSAGVELQNAPKRFIRVKRPVEVREGTGQQLKWARLEPYHGFKLRFDIDFAHPAVDSTGQSAEFDLGEGNYARDIARARTFGFTKDVEMLRSSGLALGGGLDNAIVMDDYKVLNADSLRYDAEFARHKILDAMGDLYLVGKPLLAAYSAFRSGHAMNNLLLRELLAHEDAWEIVTFENERQAPAGFTQPVRAW</sequence>
<organism>
    <name type="scientific">Acidovorax sp. (strain JS42)</name>
    <dbReference type="NCBI Taxonomy" id="232721"/>
    <lineage>
        <taxon>Bacteria</taxon>
        <taxon>Pseudomonadati</taxon>
        <taxon>Pseudomonadota</taxon>
        <taxon>Betaproteobacteria</taxon>
        <taxon>Burkholderiales</taxon>
        <taxon>Comamonadaceae</taxon>
        <taxon>Acidovorax</taxon>
    </lineage>
</organism>
<evidence type="ECO:0000255" key="1">
    <source>
        <dbReference type="HAMAP-Rule" id="MF_00388"/>
    </source>
</evidence>
<name>LPXC_ACISJ</name>